<feature type="chain" id="PRO_1000066579" description="Acyl carrier protein">
    <location>
        <begin position="1"/>
        <end position="77"/>
    </location>
</feature>
<feature type="domain" description="Carrier" evidence="2">
    <location>
        <begin position="1"/>
        <end position="76"/>
    </location>
</feature>
<feature type="modified residue" description="O-(pantetheine 4'-phosphoryl)serine" evidence="2">
    <location>
        <position position="36"/>
    </location>
</feature>
<protein>
    <recommendedName>
        <fullName evidence="1">Acyl carrier protein</fullName>
        <shortName evidence="1">ACP</shortName>
    </recommendedName>
</protein>
<evidence type="ECO:0000255" key="1">
    <source>
        <dbReference type="HAMAP-Rule" id="MF_01217"/>
    </source>
</evidence>
<evidence type="ECO:0000255" key="2">
    <source>
        <dbReference type="PROSITE-ProRule" id="PRU00258"/>
    </source>
</evidence>
<gene>
    <name evidence="1" type="primary">acpP</name>
    <name type="ordered locus">Ccur92_03490</name>
    <name type="ORF">CCV52592_1041</name>
</gene>
<proteinExistence type="inferred from homology"/>
<dbReference type="EMBL" id="CP000767">
    <property type="protein sequence ID" value="EAT99648.1"/>
    <property type="molecule type" value="Genomic_DNA"/>
</dbReference>
<dbReference type="RefSeq" id="WP_011991865.1">
    <property type="nucleotide sequence ID" value="NC_009715.2"/>
</dbReference>
<dbReference type="SMR" id="A7GWR1"/>
<dbReference type="STRING" id="360105.CCV52592_1041"/>
<dbReference type="GeneID" id="61001649"/>
<dbReference type="KEGG" id="ccv:CCV52592_1041"/>
<dbReference type="HOGENOM" id="CLU_108696_5_1_7"/>
<dbReference type="OrthoDB" id="9804551at2"/>
<dbReference type="UniPathway" id="UPA00094"/>
<dbReference type="Proteomes" id="UP000006380">
    <property type="component" value="Chromosome"/>
</dbReference>
<dbReference type="GO" id="GO:0005829">
    <property type="term" value="C:cytosol"/>
    <property type="evidence" value="ECO:0007669"/>
    <property type="project" value="TreeGrafter"/>
</dbReference>
<dbReference type="GO" id="GO:0016020">
    <property type="term" value="C:membrane"/>
    <property type="evidence" value="ECO:0007669"/>
    <property type="project" value="GOC"/>
</dbReference>
<dbReference type="GO" id="GO:0000035">
    <property type="term" value="F:acyl binding"/>
    <property type="evidence" value="ECO:0007669"/>
    <property type="project" value="TreeGrafter"/>
</dbReference>
<dbReference type="GO" id="GO:0000036">
    <property type="term" value="F:acyl carrier activity"/>
    <property type="evidence" value="ECO:0007669"/>
    <property type="project" value="UniProtKB-UniRule"/>
</dbReference>
<dbReference type="GO" id="GO:0009245">
    <property type="term" value="P:lipid A biosynthetic process"/>
    <property type="evidence" value="ECO:0007669"/>
    <property type="project" value="TreeGrafter"/>
</dbReference>
<dbReference type="Gene3D" id="1.10.1200.10">
    <property type="entry name" value="ACP-like"/>
    <property type="match status" value="1"/>
</dbReference>
<dbReference type="HAMAP" id="MF_01217">
    <property type="entry name" value="Acyl_carrier"/>
    <property type="match status" value="1"/>
</dbReference>
<dbReference type="InterPro" id="IPR003231">
    <property type="entry name" value="ACP"/>
</dbReference>
<dbReference type="InterPro" id="IPR036736">
    <property type="entry name" value="ACP-like_sf"/>
</dbReference>
<dbReference type="InterPro" id="IPR009081">
    <property type="entry name" value="PP-bd_ACP"/>
</dbReference>
<dbReference type="InterPro" id="IPR006162">
    <property type="entry name" value="Ppantetheine_attach_site"/>
</dbReference>
<dbReference type="NCBIfam" id="TIGR00517">
    <property type="entry name" value="acyl_carrier"/>
    <property type="match status" value="1"/>
</dbReference>
<dbReference type="NCBIfam" id="NF002148">
    <property type="entry name" value="PRK00982.1-2"/>
    <property type="match status" value="1"/>
</dbReference>
<dbReference type="NCBIfam" id="NF002150">
    <property type="entry name" value="PRK00982.1-4"/>
    <property type="match status" value="1"/>
</dbReference>
<dbReference type="PANTHER" id="PTHR20863">
    <property type="entry name" value="ACYL CARRIER PROTEIN"/>
    <property type="match status" value="1"/>
</dbReference>
<dbReference type="PANTHER" id="PTHR20863:SF76">
    <property type="entry name" value="CARRIER DOMAIN-CONTAINING PROTEIN"/>
    <property type="match status" value="1"/>
</dbReference>
<dbReference type="Pfam" id="PF00550">
    <property type="entry name" value="PP-binding"/>
    <property type="match status" value="1"/>
</dbReference>
<dbReference type="SUPFAM" id="SSF47336">
    <property type="entry name" value="ACP-like"/>
    <property type="match status" value="1"/>
</dbReference>
<dbReference type="PROSITE" id="PS50075">
    <property type="entry name" value="CARRIER"/>
    <property type="match status" value="1"/>
</dbReference>
<dbReference type="PROSITE" id="PS00012">
    <property type="entry name" value="PHOSPHOPANTETHEINE"/>
    <property type="match status" value="1"/>
</dbReference>
<name>ACP_CAMC5</name>
<reference key="1">
    <citation type="submission" date="2007-07" db="EMBL/GenBank/DDBJ databases">
        <title>Genome sequence of Campylobacter curvus 525.92 isolated from human feces.</title>
        <authorList>
            <person name="Fouts D.E."/>
            <person name="Mongodin E.F."/>
            <person name="Puiu D."/>
            <person name="Sebastian Y."/>
            <person name="Miller W.G."/>
            <person name="Mandrell R.E."/>
            <person name="Lastovica A.J."/>
            <person name="Nelson K.E."/>
        </authorList>
    </citation>
    <scope>NUCLEOTIDE SEQUENCE [LARGE SCALE GENOMIC DNA]</scope>
    <source>
        <strain>525.92</strain>
    </source>
</reference>
<keyword id="KW-0963">Cytoplasm</keyword>
<keyword id="KW-0275">Fatty acid biosynthesis</keyword>
<keyword id="KW-0276">Fatty acid metabolism</keyword>
<keyword id="KW-0444">Lipid biosynthesis</keyword>
<keyword id="KW-0443">Lipid metabolism</keyword>
<keyword id="KW-0596">Phosphopantetheine</keyword>
<keyword id="KW-0597">Phosphoprotein</keyword>
<keyword id="KW-1185">Reference proteome</keyword>
<accession>A7GWR1</accession>
<organism>
    <name type="scientific">Campylobacter curvus (strain 525.92)</name>
    <dbReference type="NCBI Taxonomy" id="360105"/>
    <lineage>
        <taxon>Bacteria</taxon>
        <taxon>Pseudomonadati</taxon>
        <taxon>Campylobacterota</taxon>
        <taxon>Epsilonproteobacteria</taxon>
        <taxon>Campylobacterales</taxon>
        <taxon>Campylobacteraceae</taxon>
        <taxon>Campylobacter</taxon>
    </lineage>
</organism>
<comment type="function">
    <text evidence="1">Carrier of the growing fatty acid chain in fatty acid biosynthesis.</text>
</comment>
<comment type="pathway">
    <text evidence="1">Lipid metabolism; fatty acid biosynthesis.</text>
</comment>
<comment type="subcellular location">
    <subcellularLocation>
        <location evidence="1">Cytoplasm</location>
    </subcellularLocation>
</comment>
<comment type="PTM">
    <text evidence="1">4'-phosphopantetheine is transferred from CoA to a specific serine of apo-ACP by AcpS. This modification is essential for activity because fatty acids are bound in thioester linkage to the sulfhydryl of the prosthetic group.</text>
</comment>
<comment type="similarity">
    <text evidence="1">Belongs to the acyl carrier protein (ACP) family.</text>
</comment>
<sequence length="77" mass="8566">MAVFDDVRDVVVEQLSVDPEAVKMESKIIEDLGADSLDVVELVMALEEKFEVEIPDTEAEKLISIADVVNYIEKLGK</sequence>